<feature type="chain" id="PRO_1000130629" description="Nucleotide-binding protein Gbem_0619">
    <location>
        <begin position="1"/>
        <end position="161"/>
    </location>
</feature>
<organism>
    <name type="scientific">Citrifermentans bemidjiense (strain ATCC BAA-1014 / DSM 16622 / JCM 12645 / Bem)</name>
    <name type="common">Geobacter bemidjiensis</name>
    <dbReference type="NCBI Taxonomy" id="404380"/>
    <lineage>
        <taxon>Bacteria</taxon>
        <taxon>Pseudomonadati</taxon>
        <taxon>Thermodesulfobacteriota</taxon>
        <taxon>Desulfuromonadia</taxon>
        <taxon>Geobacterales</taxon>
        <taxon>Geobacteraceae</taxon>
        <taxon>Citrifermentans</taxon>
    </lineage>
</organism>
<evidence type="ECO:0000255" key="1">
    <source>
        <dbReference type="HAMAP-Rule" id="MF_00632"/>
    </source>
</evidence>
<name>Y619_CITBB</name>
<accession>B5ED61</accession>
<sequence length="161" mass="18318">MPSFDIVSKVDMQEVDNAINQTVKEIAQRYDFKGSKCEVTLEKENIKVLADDDFKLKAVIDILQSKFIKRNISPKSLQYGKAEQASGSMVRQIITLQVGISKEKAKEIGQVIKETKLKVQSQIQDDQLRVTGKNIDDLQEVIRVLKGKDLDIDMQFVNFRS</sequence>
<protein>
    <recommendedName>
        <fullName evidence="1">Nucleotide-binding protein Gbem_0619</fullName>
    </recommendedName>
</protein>
<comment type="function">
    <text evidence="1">Nucleotide-binding protein.</text>
</comment>
<comment type="similarity">
    <text evidence="1">Belongs to the YajQ family.</text>
</comment>
<keyword id="KW-0547">Nucleotide-binding</keyword>
<keyword id="KW-1185">Reference proteome</keyword>
<gene>
    <name type="ordered locus">Gbem_0619</name>
</gene>
<dbReference type="EMBL" id="CP001124">
    <property type="protein sequence ID" value="ACH37647.1"/>
    <property type="molecule type" value="Genomic_DNA"/>
</dbReference>
<dbReference type="RefSeq" id="WP_012529054.1">
    <property type="nucleotide sequence ID" value="NC_011146.1"/>
</dbReference>
<dbReference type="SMR" id="B5ED61"/>
<dbReference type="STRING" id="404380.Gbem_0619"/>
<dbReference type="KEGG" id="gbm:Gbem_0619"/>
<dbReference type="eggNOG" id="COG1666">
    <property type="taxonomic scope" value="Bacteria"/>
</dbReference>
<dbReference type="HOGENOM" id="CLU_099839_1_0_7"/>
<dbReference type="OrthoDB" id="9801447at2"/>
<dbReference type="Proteomes" id="UP000008825">
    <property type="component" value="Chromosome"/>
</dbReference>
<dbReference type="GO" id="GO:0005829">
    <property type="term" value="C:cytosol"/>
    <property type="evidence" value="ECO:0007669"/>
    <property type="project" value="TreeGrafter"/>
</dbReference>
<dbReference type="GO" id="GO:0000166">
    <property type="term" value="F:nucleotide binding"/>
    <property type="evidence" value="ECO:0007669"/>
    <property type="project" value="TreeGrafter"/>
</dbReference>
<dbReference type="CDD" id="cd11740">
    <property type="entry name" value="YajQ_like"/>
    <property type="match status" value="1"/>
</dbReference>
<dbReference type="FunFam" id="3.30.70.990:FF:000002">
    <property type="entry name" value="UPF0234 protein LEP1GSC067_4943"/>
    <property type="match status" value="1"/>
</dbReference>
<dbReference type="Gene3D" id="3.30.70.860">
    <property type="match status" value="1"/>
</dbReference>
<dbReference type="Gene3D" id="3.30.70.990">
    <property type="entry name" value="YajQ-like, domain 2"/>
    <property type="match status" value="1"/>
</dbReference>
<dbReference type="HAMAP" id="MF_00632">
    <property type="entry name" value="YajQ"/>
    <property type="match status" value="1"/>
</dbReference>
<dbReference type="InterPro" id="IPR007551">
    <property type="entry name" value="DUF520"/>
</dbReference>
<dbReference type="InterPro" id="IPR035571">
    <property type="entry name" value="UPF0234-like_C"/>
</dbReference>
<dbReference type="InterPro" id="IPR035570">
    <property type="entry name" value="UPF0234_N"/>
</dbReference>
<dbReference type="InterPro" id="IPR036183">
    <property type="entry name" value="YajQ-like_sf"/>
</dbReference>
<dbReference type="NCBIfam" id="NF003819">
    <property type="entry name" value="PRK05412.1"/>
    <property type="match status" value="1"/>
</dbReference>
<dbReference type="PANTHER" id="PTHR30476">
    <property type="entry name" value="UPF0234 PROTEIN YAJQ"/>
    <property type="match status" value="1"/>
</dbReference>
<dbReference type="PANTHER" id="PTHR30476:SF0">
    <property type="entry name" value="UPF0234 PROTEIN YAJQ"/>
    <property type="match status" value="1"/>
</dbReference>
<dbReference type="Pfam" id="PF04461">
    <property type="entry name" value="DUF520"/>
    <property type="match status" value="1"/>
</dbReference>
<dbReference type="SUPFAM" id="SSF89963">
    <property type="entry name" value="YajQ-like"/>
    <property type="match status" value="2"/>
</dbReference>
<proteinExistence type="inferred from homology"/>
<reference key="1">
    <citation type="submission" date="2008-07" db="EMBL/GenBank/DDBJ databases">
        <title>Complete sequence of Geobacter bemidjiensis BEM.</title>
        <authorList>
            <consortium name="US DOE Joint Genome Institute"/>
            <person name="Lucas S."/>
            <person name="Copeland A."/>
            <person name="Lapidus A."/>
            <person name="Glavina del Rio T."/>
            <person name="Dalin E."/>
            <person name="Tice H."/>
            <person name="Bruce D."/>
            <person name="Goodwin L."/>
            <person name="Pitluck S."/>
            <person name="Kiss H."/>
            <person name="Brettin T."/>
            <person name="Detter J.C."/>
            <person name="Han C."/>
            <person name="Kuske C.R."/>
            <person name="Schmutz J."/>
            <person name="Larimer F."/>
            <person name="Land M."/>
            <person name="Hauser L."/>
            <person name="Kyrpides N."/>
            <person name="Lykidis A."/>
            <person name="Lovley D."/>
            <person name="Richardson P."/>
        </authorList>
    </citation>
    <scope>NUCLEOTIDE SEQUENCE [LARGE SCALE GENOMIC DNA]</scope>
    <source>
        <strain>ATCC BAA-1014 / DSM 16622 / JCM 12645 / Bem</strain>
    </source>
</reference>